<gene>
    <name evidence="1" type="primary">rpsF</name>
    <name type="ordered locus">SG4233</name>
</gene>
<reference key="1">
    <citation type="journal article" date="2008" name="Genome Res.">
        <title>Comparative genome analysis of Salmonella enteritidis PT4 and Salmonella gallinarum 287/91 provides insights into evolutionary and host adaptation pathways.</title>
        <authorList>
            <person name="Thomson N.R."/>
            <person name="Clayton D.J."/>
            <person name="Windhorst D."/>
            <person name="Vernikos G."/>
            <person name="Davidson S."/>
            <person name="Churcher C."/>
            <person name="Quail M.A."/>
            <person name="Stevens M."/>
            <person name="Jones M.A."/>
            <person name="Watson M."/>
            <person name="Barron A."/>
            <person name="Layton A."/>
            <person name="Pickard D."/>
            <person name="Kingsley R.A."/>
            <person name="Bignell A."/>
            <person name="Clark L."/>
            <person name="Harris B."/>
            <person name="Ormond D."/>
            <person name="Abdellah Z."/>
            <person name="Brooks K."/>
            <person name="Cherevach I."/>
            <person name="Chillingworth T."/>
            <person name="Woodward J."/>
            <person name="Norberczak H."/>
            <person name="Lord A."/>
            <person name="Arrowsmith C."/>
            <person name="Jagels K."/>
            <person name="Moule S."/>
            <person name="Mungall K."/>
            <person name="Saunders M."/>
            <person name="Whitehead S."/>
            <person name="Chabalgoity J.A."/>
            <person name="Maskell D."/>
            <person name="Humphreys T."/>
            <person name="Roberts M."/>
            <person name="Barrow P.A."/>
            <person name="Dougan G."/>
            <person name="Parkhill J."/>
        </authorList>
    </citation>
    <scope>NUCLEOTIDE SEQUENCE [LARGE SCALE GENOMIC DNA]</scope>
    <source>
        <strain>287/91 / NCTC 13346</strain>
    </source>
</reference>
<accession>B5R9E8</accession>
<organism>
    <name type="scientific">Salmonella gallinarum (strain 287/91 / NCTC 13346)</name>
    <dbReference type="NCBI Taxonomy" id="550538"/>
    <lineage>
        <taxon>Bacteria</taxon>
        <taxon>Pseudomonadati</taxon>
        <taxon>Pseudomonadota</taxon>
        <taxon>Gammaproteobacteria</taxon>
        <taxon>Enterobacterales</taxon>
        <taxon>Enterobacteriaceae</taxon>
        <taxon>Salmonella</taxon>
    </lineage>
</organism>
<name>RS6_SALG2</name>
<evidence type="ECO:0000255" key="1">
    <source>
        <dbReference type="HAMAP-Rule" id="MF_00360"/>
    </source>
</evidence>
<evidence type="ECO:0000256" key="2">
    <source>
        <dbReference type="SAM" id="MobiDB-lite"/>
    </source>
</evidence>
<evidence type="ECO:0000305" key="3"/>
<keyword id="KW-0687">Ribonucleoprotein</keyword>
<keyword id="KW-0689">Ribosomal protein</keyword>
<keyword id="KW-0694">RNA-binding</keyword>
<keyword id="KW-0699">rRNA-binding</keyword>
<feature type="chain" id="PRO_1000120799" description="Small ribosomal subunit protein bS6">
    <location>
        <begin position="1"/>
        <end position="131"/>
    </location>
</feature>
<feature type="region of interest" description="Disordered" evidence="2">
    <location>
        <begin position="98"/>
        <end position="131"/>
    </location>
</feature>
<feature type="compositionally biased region" description="Basic and acidic residues" evidence="2">
    <location>
        <begin position="104"/>
        <end position="116"/>
    </location>
</feature>
<feature type="compositionally biased region" description="Acidic residues" evidence="2">
    <location>
        <begin position="120"/>
        <end position="131"/>
    </location>
</feature>
<dbReference type="EMBL" id="AM933173">
    <property type="protein sequence ID" value="CAR39996.1"/>
    <property type="molecule type" value="Genomic_DNA"/>
</dbReference>
<dbReference type="RefSeq" id="WP_001216673.1">
    <property type="nucleotide sequence ID" value="NC_011274.1"/>
</dbReference>
<dbReference type="SMR" id="B5R9E8"/>
<dbReference type="GeneID" id="92804768"/>
<dbReference type="KEGG" id="seg:SG4233"/>
<dbReference type="HOGENOM" id="CLU_113441_6_1_6"/>
<dbReference type="Proteomes" id="UP000008321">
    <property type="component" value="Chromosome"/>
</dbReference>
<dbReference type="GO" id="GO:0022627">
    <property type="term" value="C:cytosolic small ribosomal subunit"/>
    <property type="evidence" value="ECO:0007669"/>
    <property type="project" value="TreeGrafter"/>
</dbReference>
<dbReference type="GO" id="GO:0070181">
    <property type="term" value="F:small ribosomal subunit rRNA binding"/>
    <property type="evidence" value="ECO:0007669"/>
    <property type="project" value="TreeGrafter"/>
</dbReference>
<dbReference type="GO" id="GO:0003735">
    <property type="term" value="F:structural constituent of ribosome"/>
    <property type="evidence" value="ECO:0007669"/>
    <property type="project" value="InterPro"/>
</dbReference>
<dbReference type="GO" id="GO:0006412">
    <property type="term" value="P:translation"/>
    <property type="evidence" value="ECO:0007669"/>
    <property type="project" value="UniProtKB-UniRule"/>
</dbReference>
<dbReference type="CDD" id="cd00473">
    <property type="entry name" value="bS6"/>
    <property type="match status" value="1"/>
</dbReference>
<dbReference type="FunFam" id="3.30.70.60:FF:000003">
    <property type="entry name" value="30S ribosomal protein S6"/>
    <property type="match status" value="1"/>
</dbReference>
<dbReference type="Gene3D" id="3.30.70.60">
    <property type="match status" value="1"/>
</dbReference>
<dbReference type="HAMAP" id="MF_00360">
    <property type="entry name" value="Ribosomal_bS6"/>
    <property type="match status" value="1"/>
</dbReference>
<dbReference type="InterPro" id="IPR000529">
    <property type="entry name" value="Ribosomal_bS6"/>
</dbReference>
<dbReference type="InterPro" id="IPR020815">
    <property type="entry name" value="Ribosomal_bS6_CS"/>
</dbReference>
<dbReference type="InterPro" id="IPR035980">
    <property type="entry name" value="Ribosomal_bS6_sf"/>
</dbReference>
<dbReference type="InterPro" id="IPR020814">
    <property type="entry name" value="Ribosomal_S6_plastid/chlpt"/>
</dbReference>
<dbReference type="InterPro" id="IPR014717">
    <property type="entry name" value="Transl_elong_EF1B/ribsomal_bS6"/>
</dbReference>
<dbReference type="NCBIfam" id="TIGR00166">
    <property type="entry name" value="S6"/>
    <property type="match status" value="1"/>
</dbReference>
<dbReference type="PANTHER" id="PTHR21011">
    <property type="entry name" value="MITOCHONDRIAL 28S RIBOSOMAL PROTEIN S6"/>
    <property type="match status" value="1"/>
</dbReference>
<dbReference type="PANTHER" id="PTHR21011:SF1">
    <property type="entry name" value="SMALL RIBOSOMAL SUBUNIT PROTEIN BS6M"/>
    <property type="match status" value="1"/>
</dbReference>
<dbReference type="Pfam" id="PF01250">
    <property type="entry name" value="Ribosomal_S6"/>
    <property type="match status" value="1"/>
</dbReference>
<dbReference type="SUPFAM" id="SSF54995">
    <property type="entry name" value="Ribosomal protein S6"/>
    <property type="match status" value="1"/>
</dbReference>
<dbReference type="PROSITE" id="PS01048">
    <property type="entry name" value="RIBOSOMAL_S6"/>
    <property type="match status" value="1"/>
</dbReference>
<sequence length="131" mass="15173">MRHYEIVFMVHPDQSEQVPGMIERYSAAITGAEGKIHRLEDWGRRQLAYPINKLHKAHYVLMNVEAPQEVIDELETTFRFNDAVIRSMVMRTKHAVTEASPMVKAKDERRERRDDFANETADDAEAGDSEE</sequence>
<proteinExistence type="inferred from homology"/>
<comment type="function">
    <text evidence="1">Binds together with bS18 to 16S ribosomal RNA.</text>
</comment>
<comment type="similarity">
    <text evidence="1">Belongs to the bacterial ribosomal protein bS6 family.</text>
</comment>
<protein>
    <recommendedName>
        <fullName evidence="1">Small ribosomal subunit protein bS6</fullName>
    </recommendedName>
    <alternativeName>
        <fullName evidence="3">30S ribosomal protein S6</fullName>
    </alternativeName>
</protein>